<feature type="chain" id="PRO_1000143572" description="NADH-quinone oxidoreductase subunit H">
    <location>
        <begin position="1"/>
        <end position="333"/>
    </location>
</feature>
<feature type="transmembrane region" description="Helical" evidence="1">
    <location>
        <begin position="15"/>
        <end position="35"/>
    </location>
</feature>
<feature type="transmembrane region" description="Helical" evidence="1">
    <location>
        <begin position="88"/>
        <end position="108"/>
    </location>
</feature>
<feature type="transmembrane region" description="Helical" evidence="1">
    <location>
        <begin position="117"/>
        <end position="137"/>
    </location>
</feature>
<feature type="transmembrane region" description="Helical" evidence="1">
    <location>
        <begin position="159"/>
        <end position="179"/>
    </location>
</feature>
<feature type="transmembrane region" description="Helical" evidence="1">
    <location>
        <begin position="191"/>
        <end position="211"/>
    </location>
</feature>
<feature type="transmembrane region" description="Helical" evidence="1">
    <location>
        <begin position="239"/>
        <end position="259"/>
    </location>
</feature>
<feature type="transmembrane region" description="Helical" evidence="1">
    <location>
        <begin position="274"/>
        <end position="296"/>
    </location>
</feature>
<feature type="transmembrane region" description="Helical" evidence="1">
    <location>
        <begin position="313"/>
        <end position="333"/>
    </location>
</feature>
<keyword id="KW-1003">Cell membrane</keyword>
<keyword id="KW-0472">Membrane</keyword>
<keyword id="KW-0520">NAD</keyword>
<keyword id="KW-0874">Quinone</keyword>
<keyword id="KW-1278">Translocase</keyword>
<keyword id="KW-0812">Transmembrane</keyword>
<keyword id="KW-1133">Transmembrane helix</keyword>
<keyword id="KW-0830">Ubiquinone</keyword>
<organism>
    <name type="scientific">Bacillus cereus (strain AH820)</name>
    <dbReference type="NCBI Taxonomy" id="405535"/>
    <lineage>
        <taxon>Bacteria</taxon>
        <taxon>Bacillati</taxon>
        <taxon>Bacillota</taxon>
        <taxon>Bacilli</taxon>
        <taxon>Bacillales</taxon>
        <taxon>Bacillaceae</taxon>
        <taxon>Bacillus</taxon>
        <taxon>Bacillus cereus group</taxon>
    </lineage>
</organism>
<reference key="1">
    <citation type="submission" date="2008-10" db="EMBL/GenBank/DDBJ databases">
        <title>Genome sequence of Bacillus cereus AH820.</title>
        <authorList>
            <person name="Dodson R.J."/>
            <person name="Durkin A.S."/>
            <person name="Rosovitz M.J."/>
            <person name="Rasko D.A."/>
            <person name="Hoffmaster A."/>
            <person name="Ravel J."/>
            <person name="Sutton G."/>
        </authorList>
    </citation>
    <scope>NUCLEOTIDE SEQUENCE [LARGE SCALE GENOMIC DNA]</scope>
    <source>
        <strain>AH820</strain>
    </source>
</reference>
<sequence length="333" mass="36895">MIETLLQSPSSWTNFFIFFGLAVLLLFAVLGFVTYGILAERKVMGFMQGRIGPNQVGGRFGLLQTVADVLKLLLKEDSIPKAADKPLFILAPVIAFAPAFMVLAVIPFTDKFQFADIGVGLLYYIAVSGITTIGVVTGGWASNNKYSLLGGMRAAAQMISYEIPLVMSVIGIVLLAGSLNLNEIVAAQENVWYIFVQPIGFVVFLIAAVAELNRTPFDLPEAESELVSGYHTEYSGFRWAFFMLSEYVYFFGMASLITVLFLGGWNPVMFLGFIPGAVWFALKFSSVVFLLIWFRVTFPRIRGDQLMEFGWKVLLPIALANIFLTALIKELFF</sequence>
<proteinExistence type="inferred from homology"/>
<evidence type="ECO:0000255" key="1">
    <source>
        <dbReference type="HAMAP-Rule" id="MF_01350"/>
    </source>
</evidence>
<comment type="function">
    <text evidence="1">NDH-1 shuttles electrons from NADH, via FMN and iron-sulfur (Fe-S) centers, to quinones in the respiratory chain. The immediate electron acceptor for the enzyme in this species is believed to be ubiquinone. Couples the redox reaction to proton translocation (for every two electrons transferred, four hydrogen ions are translocated across the cytoplasmic membrane), and thus conserves the redox energy in a proton gradient. This subunit may bind ubiquinone.</text>
</comment>
<comment type="catalytic activity">
    <reaction evidence="1">
        <text>a quinone + NADH + 5 H(+)(in) = a quinol + NAD(+) + 4 H(+)(out)</text>
        <dbReference type="Rhea" id="RHEA:57888"/>
        <dbReference type="ChEBI" id="CHEBI:15378"/>
        <dbReference type="ChEBI" id="CHEBI:24646"/>
        <dbReference type="ChEBI" id="CHEBI:57540"/>
        <dbReference type="ChEBI" id="CHEBI:57945"/>
        <dbReference type="ChEBI" id="CHEBI:132124"/>
    </reaction>
</comment>
<comment type="subunit">
    <text evidence="1">NDH-1 is composed of 14 different subunits. Subunits NuoA, H, J, K, L, M, N constitute the membrane sector of the complex.</text>
</comment>
<comment type="subcellular location">
    <subcellularLocation>
        <location evidence="1">Cell membrane</location>
        <topology evidence="1">Multi-pass membrane protein</topology>
    </subcellularLocation>
</comment>
<comment type="similarity">
    <text evidence="1">Belongs to the complex I subunit 1 family.</text>
</comment>
<gene>
    <name evidence="1" type="primary">nuoH</name>
    <name type="ordered locus">BCAH820_5387</name>
</gene>
<name>NUOH_BACC0</name>
<protein>
    <recommendedName>
        <fullName evidence="1">NADH-quinone oxidoreductase subunit H</fullName>
        <ecNumber evidence="1">7.1.1.-</ecNumber>
    </recommendedName>
    <alternativeName>
        <fullName evidence="1">NADH dehydrogenase I subunit H</fullName>
    </alternativeName>
    <alternativeName>
        <fullName evidence="1">NDH-1 subunit H</fullName>
    </alternativeName>
</protein>
<accession>B7JGM1</accession>
<dbReference type="EC" id="7.1.1.-" evidence="1"/>
<dbReference type="EMBL" id="CP001283">
    <property type="protein sequence ID" value="ACK89168.1"/>
    <property type="molecule type" value="Genomic_DNA"/>
</dbReference>
<dbReference type="RefSeq" id="WP_000573430.1">
    <property type="nucleotide sequence ID" value="NC_011773.1"/>
</dbReference>
<dbReference type="SMR" id="B7JGM1"/>
<dbReference type="GeneID" id="93005827"/>
<dbReference type="KEGG" id="bcu:BCAH820_5387"/>
<dbReference type="HOGENOM" id="CLU_015134_0_1_9"/>
<dbReference type="Proteomes" id="UP000001363">
    <property type="component" value="Chromosome"/>
</dbReference>
<dbReference type="GO" id="GO:0005886">
    <property type="term" value="C:plasma membrane"/>
    <property type="evidence" value="ECO:0007669"/>
    <property type="project" value="UniProtKB-SubCell"/>
</dbReference>
<dbReference type="GO" id="GO:0003954">
    <property type="term" value="F:NADH dehydrogenase activity"/>
    <property type="evidence" value="ECO:0007669"/>
    <property type="project" value="TreeGrafter"/>
</dbReference>
<dbReference type="GO" id="GO:0016655">
    <property type="term" value="F:oxidoreductase activity, acting on NAD(P)H, quinone or similar compound as acceptor"/>
    <property type="evidence" value="ECO:0007669"/>
    <property type="project" value="UniProtKB-UniRule"/>
</dbReference>
<dbReference type="GO" id="GO:0048038">
    <property type="term" value="F:quinone binding"/>
    <property type="evidence" value="ECO:0007669"/>
    <property type="project" value="UniProtKB-KW"/>
</dbReference>
<dbReference type="GO" id="GO:0009060">
    <property type="term" value="P:aerobic respiration"/>
    <property type="evidence" value="ECO:0007669"/>
    <property type="project" value="TreeGrafter"/>
</dbReference>
<dbReference type="HAMAP" id="MF_01350">
    <property type="entry name" value="NDH1_NuoH"/>
    <property type="match status" value="1"/>
</dbReference>
<dbReference type="InterPro" id="IPR001694">
    <property type="entry name" value="NADH_UbQ_OxRdtase_su1/FPO"/>
</dbReference>
<dbReference type="InterPro" id="IPR018086">
    <property type="entry name" value="NADH_UbQ_OxRdtase_su1_CS"/>
</dbReference>
<dbReference type="NCBIfam" id="NF004741">
    <property type="entry name" value="PRK06076.1-2"/>
    <property type="match status" value="1"/>
</dbReference>
<dbReference type="PANTHER" id="PTHR11432">
    <property type="entry name" value="NADH DEHYDROGENASE SUBUNIT 1"/>
    <property type="match status" value="1"/>
</dbReference>
<dbReference type="PANTHER" id="PTHR11432:SF3">
    <property type="entry name" value="NADH-UBIQUINONE OXIDOREDUCTASE CHAIN 1"/>
    <property type="match status" value="1"/>
</dbReference>
<dbReference type="Pfam" id="PF00146">
    <property type="entry name" value="NADHdh"/>
    <property type="match status" value="1"/>
</dbReference>
<dbReference type="PROSITE" id="PS00668">
    <property type="entry name" value="COMPLEX1_ND1_2"/>
    <property type="match status" value="1"/>
</dbReference>